<evidence type="ECO:0000255" key="1">
    <source>
        <dbReference type="HAMAP-Rule" id="MF_00530"/>
    </source>
</evidence>
<organism>
    <name type="scientific">Corynebacterium diphtheriae (strain ATCC 700971 / NCTC 13129 / Biotype gravis)</name>
    <dbReference type="NCBI Taxonomy" id="257309"/>
    <lineage>
        <taxon>Bacteria</taxon>
        <taxon>Bacillati</taxon>
        <taxon>Actinomycetota</taxon>
        <taxon>Actinomycetes</taxon>
        <taxon>Mycobacteriales</taxon>
        <taxon>Corynebacteriaceae</taxon>
        <taxon>Corynebacterium</taxon>
    </lineage>
</organism>
<proteinExistence type="inferred from homology"/>
<comment type="function">
    <text evidence="1">Produces ATP from ADP in the presence of a proton gradient across the membrane.</text>
</comment>
<comment type="subunit">
    <text>F-type ATPases have 2 components, CF(1) - the catalytic core - and CF(0) - the membrane proton channel. CF(1) has five subunits: alpha(3), beta(3), gamma(1), delta(1), epsilon(1). CF(0) has three main subunits: a, b and c.</text>
</comment>
<comment type="subcellular location">
    <subcellularLocation>
        <location evidence="1">Cell membrane</location>
        <topology evidence="1">Peripheral membrane protein</topology>
    </subcellularLocation>
</comment>
<comment type="similarity">
    <text evidence="1">Belongs to the ATPase epsilon chain family.</text>
</comment>
<protein>
    <recommendedName>
        <fullName evidence="1">ATP synthase epsilon chain</fullName>
    </recommendedName>
    <alternativeName>
        <fullName evidence="1">ATP synthase F1 sector epsilon subunit</fullName>
    </alternativeName>
    <alternativeName>
        <fullName evidence="1">F-ATPase epsilon subunit</fullName>
    </alternativeName>
</protein>
<name>ATPE_CORDI</name>
<feature type="chain" id="PRO_0000188125" description="ATP synthase epsilon chain">
    <location>
        <begin position="1"/>
        <end position="123"/>
    </location>
</feature>
<gene>
    <name evidence="1" type="primary">atpC</name>
    <name type="ordered locus">DIP1053</name>
</gene>
<sequence length="123" mass="13166">MADITVELVSVERMLWSGKASIVTAQTVEGEIGVLPGHEPLLAQLVDNGVVTIRPVDGDKLVAAVQGGFLSISKEKVTILAEYAIWADEVNTAESESHLQADDEISKARAEAELKAVRRKAEA</sequence>
<keyword id="KW-0066">ATP synthesis</keyword>
<keyword id="KW-1003">Cell membrane</keyword>
<keyword id="KW-0139">CF(1)</keyword>
<keyword id="KW-0375">Hydrogen ion transport</keyword>
<keyword id="KW-0406">Ion transport</keyword>
<keyword id="KW-0472">Membrane</keyword>
<keyword id="KW-1185">Reference proteome</keyword>
<keyword id="KW-0813">Transport</keyword>
<reference key="1">
    <citation type="journal article" date="2003" name="Nucleic Acids Res.">
        <title>The complete genome sequence and analysis of Corynebacterium diphtheriae NCTC13129.</title>
        <authorList>
            <person name="Cerdeno-Tarraga A.-M."/>
            <person name="Efstratiou A."/>
            <person name="Dover L.G."/>
            <person name="Holden M.T.G."/>
            <person name="Pallen M.J."/>
            <person name="Bentley S.D."/>
            <person name="Besra G.S."/>
            <person name="Churcher C.M."/>
            <person name="James K.D."/>
            <person name="De Zoysa A."/>
            <person name="Chillingworth T."/>
            <person name="Cronin A."/>
            <person name="Dowd L."/>
            <person name="Feltwell T."/>
            <person name="Hamlin N."/>
            <person name="Holroyd S."/>
            <person name="Jagels K."/>
            <person name="Moule S."/>
            <person name="Quail M.A."/>
            <person name="Rabbinowitsch E."/>
            <person name="Rutherford K.M."/>
            <person name="Thomson N.R."/>
            <person name="Unwin L."/>
            <person name="Whitehead S."/>
            <person name="Barrell B.G."/>
            <person name="Parkhill J."/>
        </authorList>
    </citation>
    <scope>NUCLEOTIDE SEQUENCE [LARGE SCALE GENOMIC DNA]</scope>
    <source>
        <strain>ATCC 700971 / NCTC 13129 / Biotype gravis</strain>
    </source>
</reference>
<accession>Q6NHS8</accession>
<dbReference type="EMBL" id="BX248356">
    <property type="protein sequence ID" value="CAE49573.1"/>
    <property type="molecule type" value="Genomic_DNA"/>
</dbReference>
<dbReference type="RefSeq" id="WP_003851106.1">
    <property type="nucleotide sequence ID" value="NC_002935.2"/>
</dbReference>
<dbReference type="SMR" id="Q6NHS8"/>
<dbReference type="STRING" id="257309.DIP1053"/>
<dbReference type="KEGG" id="cdi:DIP1053"/>
<dbReference type="HOGENOM" id="CLU_084338_4_0_11"/>
<dbReference type="Proteomes" id="UP000002198">
    <property type="component" value="Chromosome"/>
</dbReference>
<dbReference type="GO" id="GO:0005886">
    <property type="term" value="C:plasma membrane"/>
    <property type="evidence" value="ECO:0007669"/>
    <property type="project" value="UniProtKB-SubCell"/>
</dbReference>
<dbReference type="GO" id="GO:0045259">
    <property type="term" value="C:proton-transporting ATP synthase complex"/>
    <property type="evidence" value="ECO:0007669"/>
    <property type="project" value="UniProtKB-KW"/>
</dbReference>
<dbReference type="GO" id="GO:0005524">
    <property type="term" value="F:ATP binding"/>
    <property type="evidence" value="ECO:0007669"/>
    <property type="project" value="UniProtKB-UniRule"/>
</dbReference>
<dbReference type="GO" id="GO:0046933">
    <property type="term" value="F:proton-transporting ATP synthase activity, rotational mechanism"/>
    <property type="evidence" value="ECO:0007669"/>
    <property type="project" value="UniProtKB-UniRule"/>
</dbReference>
<dbReference type="CDD" id="cd12152">
    <property type="entry name" value="F1-ATPase_delta"/>
    <property type="match status" value="1"/>
</dbReference>
<dbReference type="Gene3D" id="2.60.15.10">
    <property type="entry name" value="F0F1 ATP synthase delta/epsilon subunit, N-terminal"/>
    <property type="match status" value="1"/>
</dbReference>
<dbReference type="HAMAP" id="MF_00530">
    <property type="entry name" value="ATP_synth_epsil_bac"/>
    <property type="match status" value="1"/>
</dbReference>
<dbReference type="InterPro" id="IPR001469">
    <property type="entry name" value="ATP_synth_F1_dsu/esu"/>
</dbReference>
<dbReference type="InterPro" id="IPR020546">
    <property type="entry name" value="ATP_synth_F1_dsu/esu_N"/>
</dbReference>
<dbReference type="InterPro" id="IPR036771">
    <property type="entry name" value="ATPsynth_dsu/esu_N"/>
</dbReference>
<dbReference type="NCBIfam" id="TIGR01216">
    <property type="entry name" value="ATP_synt_epsi"/>
    <property type="match status" value="1"/>
</dbReference>
<dbReference type="NCBIfam" id="NF001852">
    <property type="entry name" value="PRK00571.2-5"/>
    <property type="match status" value="1"/>
</dbReference>
<dbReference type="NCBIfam" id="NF009977">
    <property type="entry name" value="PRK13442.1"/>
    <property type="match status" value="1"/>
</dbReference>
<dbReference type="PANTHER" id="PTHR13822">
    <property type="entry name" value="ATP SYNTHASE DELTA/EPSILON CHAIN"/>
    <property type="match status" value="1"/>
</dbReference>
<dbReference type="PANTHER" id="PTHR13822:SF10">
    <property type="entry name" value="ATP SYNTHASE EPSILON CHAIN, CHLOROPLASTIC"/>
    <property type="match status" value="1"/>
</dbReference>
<dbReference type="Pfam" id="PF02823">
    <property type="entry name" value="ATP-synt_DE_N"/>
    <property type="match status" value="1"/>
</dbReference>
<dbReference type="SUPFAM" id="SSF51344">
    <property type="entry name" value="Epsilon subunit of F1F0-ATP synthase N-terminal domain"/>
    <property type="match status" value="1"/>
</dbReference>